<name>ARGC_SINMW</name>
<sequence>MKPKIFIDGEHGTTGLQIRTRMAGRTDLELLSIPEAERRNAAMREDLLNSADIAILCLPDDASREAVAMVAGNNRVRIIDTSTAHRVAPDWAYGFAEMDKAQPRKIRDARHVANPGCYPTGAIALIRPLRQAGILPDGYPVTVNAVSGYTGGGKQMIAQIEDDKSPDHIRAPHFLYGLTLKHKHVPEMKMHGLLERAPVFSPSVGKFAQGMIVQVPLYVDDLAAGATIESIHRALVDHYAGQSIVEVVPLEESAKLARIDATELAGKDTMKLFVFGTDGGAHVNMVALLDNLGKGASGAAVQNMDLMLSA</sequence>
<comment type="function">
    <text evidence="1">Catalyzes the NADPH-dependent reduction of N-acetyl-5-glutamyl phosphate to yield N-acetyl-L-glutamate 5-semialdehyde.</text>
</comment>
<comment type="catalytic activity">
    <reaction evidence="1">
        <text>N-acetyl-L-glutamate 5-semialdehyde + phosphate + NADP(+) = N-acetyl-L-glutamyl 5-phosphate + NADPH + H(+)</text>
        <dbReference type="Rhea" id="RHEA:21588"/>
        <dbReference type="ChEBI" id="CHEBI:15378"/>
        <dbReference type="ChEBI" id="CHEBI:29123"/>
        <dbReference type="ChEBI" id="CHEBI:43474"/>
        <dbReference type="ChEBI" id="CHEBI:57783"/>
        <dbReference type="ChEBI" id="CHEBI:57936"/>
        <dbReference type="ChEBI" id="CHEBI:58349"/>
        <dbReference type="EC" id="1.2.1.38"/>
    </reaction>
</comment>
<comment type="pathway">
    <text evidence="1">Amino-acid biosynthesis; L-arginine biosynthesis; N(2)-acetyl-L-ornithine from L-glutamate: step 3/4.</text>
</comment>
<comment type="subcellular location">
    <subcellularLocation>
        <location evidence="1">Cytoplasm</location>
    </subcellularLocation>
</comment>
<comment type="similarity">
    <text evidence="1">Belongs to the NAGSA dehydrogenase family. Type 2 subfamily.</text>
</comment>
<evidence type="ECO:0000255" key="1">
    <source>
        <dbReference type="HAMAP-Rule" id="MF_01110"/>
    </source>
</evidence>
<keyword id="KW-0028">Amino-acid biosynthesis</keyword>
<keyword id="KW-0055">Arginine biosynthesis</keyword>
<keyword id="KW-0963">Cytoplasm</keyword>
<keyword id="KW-0521">NADP</keyword>
<keyword id="KW-0560">Oxidoreductase</keyword>
<proteinExistence type="inferred from homology"/>
<dbReference type="EC" id="1.2.1.38" evidence="1"/>
<dbReference type="EMBL" id="CP000738">
    <property type="protein sequence ID" value="ABR59714.1"/>
    <property type="molecule type" value="Genomic_DNA"/>
</dbReference>
<dbReference type="RefSeq" id="WP_011975053.1">
    <property type="nucleotide sequence ID" value="NC_009636.1"/>
</dbReference>
<dbReference type="RefSeq" id="YP_001326549.1">
    <property type="nucleotide sequence ID" value="NC_009636.1"/>
</dbReference>
<dbReference type="SMR" id="A6U7T4"/>
<dbReference type="STRING" id="366394.Smed_0859"/>
<dbReference type="GeneID" id="61612307"/>
<dbReference type="KEGG" id="smd:Smed_0859"/>
<dbReference type="PATRIC" id="fig|366394.8.peg.3973"/>
<dbReference type="eggNOG" id="COG0002">
    <property type="taxonomic scope" value="Bacteria"/>
</dbReference>
<dbReference type="HOGENOM" id="CLU_077118_0_0_5"/>
<dbReference type="OrthoDB" id="9801289at2"/>
<dbReference type="UniPathway" id="UPA00068">
    <property type="reaction ID" value="UER00108"/>
</dbReference>
<dbReference type="Proteomes" id="UP000001108">
    <property type="component" value="Chromosome"/>
</dbReference>
<dbReference type="GO" id="GO:0005737">
    <property type="term" value="C:cytoplasm"/>
    <property type="evidence" value="ECO:0007669"/>
    <property type="project" value="UniProtKB-SubCell"/>
</dbReference>
<dbReference type="GO" id="GO:0003942">
    <property type="term" value="F:N-acetyl-gamma-glutamyl-phosphate reductase activity"/>
    <property type="evidence" value="ECO:0007669"/>
    <property type="project" value="UniProtKB-UniRule"/>
</dbReference>
<dbReference type="GO" id="GO:0051287">
    <property type="term" value="F:NAD binding"/>
    <property type="evidence" value="ECO:0007669"/>
    <property type="project" value="InterPro"/>
</dbReference>
<dbReference type="GO" id="GO:0006526">
    <property type="term" value="P:L-arginine biosynthetic process"/>
    <property type="evidence" value="ECO:0007669"/>
    <property type="project" value="UniProtKB-UniRule"/>
</dbReference>
<dbReference type="CDD" id="cd23935">
    <property type="entry name" value="AGPR_2_C"/>
    <property type="match status" value="1"/>
</dbReference>
<dbReference type="CDD" id="cd17896">
    <property type="entry name" value="AGPR_2_N"/>
    <property type="match status" value="1"/>
</dbReference>
<dbReference type="Gene3D" id="3.30.360.10">
    <property type="entry name" value="Dihydrodipicolinate Reductase, domain 2"/>
    <property type="match status" value="1"/>
</dbReference>
<dbReference type="Gene3D" id="3.40.50.720">
    <property type="entry name" value="NAD(P)-binding Rossmann-like Domain"/>
    <property type="match status" value="1"/>
</dbReference>
<dbReference type="HAMAP" id="MF_01110">
    <property type="entry name" value="ArgC_type2"/>
    <property type="match status" value="1"/>
</dbReference>
<dbReference type="InterPro" id="IPR023013">
    <property type="entry name" value="AGPR_AS"/>
</dbReference>
<dbReference type="InterPro" id="IPR010136">
    <property type="entry name" value="AGPR_type-2"/>
</dbReference>
<dbReference type="InterPro" id="IPR036291">
    <property type="entry name" value="NAD(P)-bd_dom_sf"/>
</dbReference>
<dbReference type="InterPro" id="IPR050085">
    <property type="entry name" value="NAGSA_dehydrogenase"/>
</dbReference>
<dbReference type="InterPro" id="IPR000534">
    <property type="entry name" value="Semialdehyde_DH_NAD-bd"/>
</dbReference>
<dbReference type="NCBIfam" id="TIGR01851">
    <property type="entry name" value="argC_other"/>
    <property type="match status" value="1"/>
</dbReference>
<dbReference type="PANTHER" id="PTHR32338:SF10">
    <property type="entry name" value="N-ACETYL-GAMMA-GLUTAMYL-PHOSPHATE REDUCTASE, CHLOROPLASTIC-RELATED"/>
    <property type="match status" value="1"/>
</dbReference>
<dbReference type="PANTHER" id="PTHR32338">
    <property type="entry name" value="N-ACETYL-GAMMA-GLUTAMYL-PHOSPHATE REDUCTASE, CHLOROPLASTIC-RELATED-RELATED"/>
    <property type="match status" value="1"/>
</dbReference>
<dbReference type="Pfam" id="PF01118">
    <property type="entry name" value="Semialdhyde_dh"/>
    <property type="match status" value="1"/>
</dbReference>
<dbReference type="Pfam" id="PF22698">
    <property type="entry name" value="Semialdhyde_dhC_1"/>
    <property type="match status" value="1"/>
</dbReference>
<dbReference type="SMART" id="SM00859">
    <property type="entry name" value="Semialdhyde_dh"/>
    <property type="match status" value="1"/>
</dbReference>
<dbReference type="SUPFAM" id="SSF55347">
    <property type="entry name" value="Glyceraldehyde-3-phosphate dehydrogenase-like, C-terminal domain"/>
    <property type="match status" value="1"/>
</dbReference>
<dbReference type="SUPFAM" id="SSF51735">
    <property type="entry name" value="NAD(P)-binding Rossmann-fold domains"/>
    <property type="match status" value="1"/>
</dbReference>
<dbReference type="PROSITE" id="PS01224">
    <property type="entry name" value="ARGC"/>
    <property type="match status" value="1"/>
</dbReference>
<reference key="1">
    <citation type="submission" date="2007-06" db="EMBL/GenBank/DDBJ databases">
        <title>Complete sequence of Sinorhizobium medicae WSM419 chromosome.</title>
        <authorList>
            <consortium name="US DOE Joint Genome Institute"/>
            <person name="Copeland A."/>
            <person name="Lucas S."/>
            <person name="Lapidus A."/>
            <person name="Barry K."/>
            <person name="Glavina del Rio T."/>
            <person name="Dalin E."/>
            <person name="Tice H."/>
            <person name="Pitluck S."/>
            <person name="Chain P."/>
            <person name="Malfatti S."/>
            <person name="Shin M."/>
            <person name="Vergez L."/>
            <person name="Schmutz J."/>
            <person name="Larimer F."/>
            <person name="Land M."/>
            <person name="Hauser L."/>
            <person name="Kyrpides N."/>
            <person name="Mikhailova N."/>
            <person name="Reeve W.G."/>
            <person name="Richardson P."/>
        </authorList>
    </citation>
    <scope>NUCLEOTIDE SEQUENCE [LARGE SCALE GENOMIC DNA]</scope>
    <source>
        <strain>WSM419</strain>
    </source>
</reference>
<protein>
    <recommendedName>
        <fullName evidence="1">N-acetyl-gamma-glutamyl-phosphate reductase</fullName>
        <shortName evidence="1">AGPR</shortName>
        <ecNumber evidence="1">1.2.1.38</ecNumber>
    </recommendedName>
    <alternativeName>
        <fullName evidence="1">N-acetyl-glutamate semialdehyde dehydrogenase</fullName>
        <shortName evidence="1">NAGSA dehydrogenase</shortName>
    </alternativeName>
</protein>
<gene>
    <name evidence="1" type="primary">argC</name>
    <name type="ordered locus">Smed_0859</name>
</gene>
<organism>
    <name type="scientific">Sinorhizobium medicae (strain WSM419)</name>
    <name type="common">Ensifer medicae</name>
    <dbReference type="NCBI Taxonomy" id="366394"/>
    <lineage>
        <taxon>Bacteria</taxon>
        <taxon>Pseudomonadati</taxon>
        <taxon>Pseudomonadota</taxon>
        <taxon>Alphaproteobacteria</taxon>
        <taxon>Hyphomicrobiales</taxon>
        <taxon>Rhizobiaceae</taxon>
        <taxon>Sinorhizobium/Ensifer group</taxon>
        <taxon>Sinorhizobium</taxon>
    </lineage>
</organism>
<accession>A6U7T4</accession>
<feature type="chain" id="PRO_1000065146" description="N-acetyl-gamma-glutamyl-phosphate reductase">
    <location>
        <begin position="1"/>
        <end position="310"/>
    </location>
</feature>
<feature type="active site" evidence="1">
    <location>
        <position position="117"/>
    </location>
</feature>